<accession>A8H552</accession>
<dbReference type="EC" id="2.5.1.-" evidence="1"/>
<dbReference type="EMBL" id="CP000851">
    <property type="protein sequence ID" value="ABV87689.1"/>
    <property type="molecule type" value="Genomic_DNA"/>
</dbReference>
<dbReference type="RefSeq" id="WP_012155603.1">
    <property type="nucleotide sequence ID" value="NC_009901.1"/>
</dbReference>
<dbReference type="SMR" id="A8H552"/>
<dbReference type="STRING" id="398579.Spea_2369"/>
<dbReference type="KEGG" id="spl:Spea_2369"/>
<dbReference type="eggNOG" id="COG0500">
    <property type="taxonomic scope" value="Bacteria"/>
</dbReference>
<dbReference type="HOGENOM" id="CLU_052665_0_0_6"/>
<dbReference type="OrthoDB" id="9773188at2"/>
<dbReference type="Proteomes" id="UP000002608">
    <property type="component" value="Chromosome"/>
</dbReference>
<dbReference type="GO" id="GO:0008168">
    <property type="term" value="F:methyltransferase activity"/>
    <property type="evidence" value="ECO:0007669"/>
    <property type="project" value="TreeGrafter"/>
</dbReference>
<dbReference type="GO" id="GO:0016765">
    <property type="term" value="F:transferase activity, transferring alkyl or aryl (other than methyl) groups"/>
    <property type="evidence" value="ECO:0007669"/>
    <property type="project" value="UniProtKB-UniRule"/>
</dbReference>
<dbReference type="GO" id="GO:0002098">
    <property type="term" value="P:tRNA wobble uridine modification"/>
    <property type="evidence" value="ECO:0007669"/>
    <property type="project" value="InterPro"/>
</dbReference>
<dbReference type="CDD" id="cd02440">
    <property type="entry name" value="AdoMet_MTases"/>
    <property type="match status" value="1"/>
</dbReference>
<dbReference type="Gene3D" id="3.40.50.150">
    <property type="entry name" value="Vaccinia Virus protein VP39"/>
    <property type="match status" value="1"/>
</dbReference>
<dbReference type="HAMAP" id="MF_01590">
    <property type="entry name" value="tRNA_carboxymethyltr_CmoB"/>
    <property type="match status" value="1"/>
</dbReference>
<dbReference type="InterPro" id="IPR010017">
    <property type="entry name" value="CmoB"/>
</dbReference>
<dbReference type="InterPro" id="IPR027555">
    <property type="entry name" value="Mo5U34_MeTrfas-like"/>
</dbReference>
<dbReference type="InterPro" id="IPR029063">
    <property type="entry name" value="SAM-dependent_MTases_sf"/>
</dbReference>
<dbReference type="NCBIfam" id="NF011650">
    <property type="entry name" value="PRK15068.1"/>
    <property type="match status" value="1"/>
</dbReference>
<dbReference type="NCBIfam" id="TIGR00452">
    <property type="entry name" value="tRNA 5-methoxyuridine(34)/uridine 5-oxyacetic acid(34) synthase CmoB"/>
    <property type="match status" value="1"/>
</dbReference>
<dbReference type="PANTHER" id="PTHR43464">
    <property type="entry name" value="METHYLTRANSFERASE"/>
    <property type="match status" value="1"/>
</dbReference>
<dbReference type="PANTHER" id="PTHR43464:SF95">
    <property type="entry name" value="TRNA U34 CARBOXYMETHYLTRANSFERASE"/>
    <property type="match status" value="1"/>
</dbReference>
<dbReference type="Pfam" id="PF08003">
    <property type="entry name" value="Methyltransf_9"/>
    <property type="match status" value="1"/>
</dbReference>
<dbReference type="SUPFAM" id="SSF53335">
    <property type="entry name" value="S-adenosyl-L-methionine-dependent methyltransferases"/>
    <property type="match status" value="1"/>
</dbReference>
<gene>
    <name evidence="1" type="primary">cmoB</name>
    <name type="ordered locus">Spea_2369</name>
</gene>
<reference key="1">
    <citation type="submission" date="2007-10" db="EMBL/GenBank/DDBJ databases">
        <title>Complete sequence of Shewanella pealeana ATCC 700345.</title>
        <authorList>
            <consortium name="US DOE Joint Genome Institute"/>
            <person name="Copeland A."/>
            <person name="Lucas S."/>
            <person name="Lapidus A."/>
            <person name="Barry K."/>
            <person name="Glavina del Rio T."/>
            <person name="Dalin E."/>
            <person name="Tice H."/>
            <person name="Pitluck S."/>
            <person name="Chertkov O."/>
            <person name="Brettin T."/>
            <person name="Bruce D."/>
            <person name="Detter J.C."/>
            <person name="Han C."/>
            <person name="Schmutz J."/>
            <person name="Larimer F."/>
            <person name="Land M."/>
            <person name="Hauser L."/>
            <person name="Kyrpides N."/>
            <person name="Kim E."/>
            <person name="Zhao J.-S.Z."/>
            <person name="Manno D."/>
            <person name="Hawari J."/>
            <person name="Richardson P."/>
        </authorList>
    </citation>
    <scope>NUCLEOTIDE SEQUENCE [LARGE SCALE GENOMIC DNA]</scope>
    <source>
        <strain>ATCC 700345 / ANG-SQ1</strain>
    </source>
</reference>
<protein>
    <recommendedName>
        <fullName evidence="1">tRNA U34 carboxymethyltransferase</fullName>
        <ecNumber evidence="1">2.5.1.-</ecNumber>
    </recommendedName>
</protein>
<sequence length="330" mass="37760">MISFSSFYKQISDSSLQHWLETLPSILGQWQRDHKHGSLPKWEKVLNKLHYPDADIIDFKTSVKIGSGEQLSDGEREKLENLLGIFKPWRKGPYSLHGVEIDTEWRSDWKWERVVPHISPLANRTVLDVGCGSGYHMWRMLGEGAKHVVGIDPSPLFMCQFEAVKRLAGNEHPVHFLPLGIEELPPLDAFDTVFSMGVLYHRRSPIDHIYQLRDQLRTGGELVLETLVIDGDENTVLVPKDRYGKMNNVWFLPSVDALMLWLKKCDFTDIRCVDVDVTSLAEQRSTQWMPNESLVDYLDPNDVSLTVEGYPAPKRATIIATKNQPNKDLI</sequence>
<organism>
    <name type="scientific">Shewanella pealeana (strain ATCC 700345 / ANG-SQ1)</name>
    <dbReference type="NCBI Taxonomy" id="398579"/>
    <lineage>
        <taxon>Bacteria</taxon>
        <taxon>Pseudomonadati</taxon>
        <taxon>Pseudomonadota</taxon>
        <taxon>Gammaproteobacteria</taxon>
        <taxon>Alteromonadales</taxon>
        <taxon>Shewanellaceae</taxon>
        <taxon>Shewanella</taxon>
    </lineage>
</organism>
<name>CMOB_SHEPA</name>
<feature type="chain" id="PRO_1000087974" description="tRNA U34 carboxymethyltransferase">
    <location>
        <begin position="1"/>
        <end position="330"/>
    </location>
</feature>
<feature type="binding site" evidence="1">
    <location>
        <position position="91"/>
    </location>
    <ligand>
        <name>carboxy-S-adenosyl-L-methionine</name>
        <dbReference type="ChEBI" id="CHEBI:134278"/>
    </ligand>
</feature>
<feature type="binding site" evidence="1">
    <location>
        <position position="105"/>
    </location>
    <ligand>
        <name>carboxy-S-adenosyl-L-methionine</name>
        <dbReference type="ChEBI" id="CHEBI:134278"/>
    </ligand>
</feature>
<feature type="binding site" evidence="1">
    <location>
        <position position="110"/>
    </location>
    <ligand>
        <name>carboxy-S-adenosyl-L-methionine</name>
        <dbReference type="ChEBI" id="CHEBI:134278"/>
    </ligand>
</feature>
<feature type="binding site" evidence="1">
    <location>
        <position position="130"/>
    </location>
    <ligand>
        <name>carboxy-S-adenosyl-L-methionine</name>
        <dbReference type="ChEBI" id="CHEBI:134278"/>
    </ligand>
</feature>
<feature type="binding site" evidence="1">
    <location>
        <begin position="152"/>
        <end position="154"/>
    </location>
    <ligand>
        <name>carboxy-S-adenosyl-L-methionine</name>
        <dbReference type="ChEBI" id="CHEBI:134278"/>
    </ligand>
</feature>
<feature type="binding site" evidence="1">
    <location>
        <begin position="181"/>
        <end position="182"/>
    </location>
    <ligand>
        <name>carboxy-S-adenosyl-L-methionine</name>
        <dbReference type="ChEBI" id="CHEBI:134278"/>
    </ligand>
</feature>
<feature type="binding site" evidence="1">
    <location>
        <position position="196"/>
    </location>
    <ligand>
        <name>carboxy-S-adenosyl-L-methionine</name>
        <dbReference type="ChEBI" id="CHEBI:134278"/>
    </ligand>
</feature>
<feature type="binding site" evidence="1">
    <location>
        <position position="200"/>
    </location>
    <ligand>
        <name>carboxy-S-adenosyl-L-methionine</name>
        <dbReference type="ChEBI" id="CHEBI:134278"/>
    </ligand>
</feature>
<feature type="binding site" evidence="1">
    <location>
        <position position="315"/>
    </location>
    <ligand>
        <name>carboxy-S-adenosyl-L-methionine</name>
        <dbReference type="ChEBI" id="CHEBI:134278"/>
    </ligand>
</feature>
<evidence type="ECO:0000255" key="1">
    <source>
        <dbReference type="HAMAP-Rule" id="MF_01590"/>
    </source>
</evidence>
<comment type="function">
    <text evidence="1">Catalyzes carboxymethyl transfer from carboxy-S-adenosyl-L-methionine (Cx-SAM) to 5-hydroxyuridine (ho5U) to form 5-carboxymethoxyuridine (cmo5U) at position 34 in tRNAs.</text>
</comment>
<comment type="catalytic activity">
    <reaction evidence="1">
        <text>carboxy-S-adenosyl-L-methionine + 5-hydroxyuridine(34) in tRNA = 5-carboxymethoxyuridine(34) in tRNA + S-adenosyl-L-homocysteine + H(+)</text>
        <dbReference type="Rhea" id="RHEA:52848"/>
        <dbReference type="Rhea" id="RHEA-COMP:13381"/>
        <dbReference type="Rhea" id="RHEA-COMP:13383"/>
        <dbReference type="ChEBI" id="CHEBI:15378"/>
        <dbReference type="ChEBI" id="CHEBI:57856"/>
        <dbReference type="ChEBI" id="CHEBI:134278"/>
        <dbReference type="ChEBI" id="CHEBI:136877"/>
        <dbReference type="ChEBI" id="CHEBI:136879"/>
    </reaction>
</comment>
<comment type="subunit">
    <text evidence="1">Homotetramer.</text>
</comment>
<comment type="similarity">
    <text evidence="1">Belongs to the class I-like SAM-binding methyltransferase superfamily. CmoB family.</text>
</comment>
<keyword id="KW-1185">Reference proteome</keyword>
<keyword id="KW-0808">Transferase</keyword>
<keyword id="KW-0819">tRNA processing</keyword>
<proteinExistence type="inferred from homology"/>